<evidence type="ECO:0000250" key="1"/>
<evidence type="ECO:0000305" key="2"/>
<dbReference type="EC" id="3.6.1.1"/>
<dbReference type="EMBL" id="AC034257">
    <property type="protein sequence ID" value="AAF99814.1"/>
    <property type="molecule type" value="Genomic_DNA"/>
</dbReference>
<dbReference type="EMBL" id="CP002684">
    <property type="protein sequence ID" value="AEE29624.1"/>
    <property type="molecule type" value="Genomic_DNA"/>
</dbReference>
<dbReference type="EMBL" id="CP002684">
    <property type="protein sequence ID" value="AEE29625.1"/>
    <property type="molecule type" value="Genomic_DNA"/>
</dbReference>
<dbReference type="EMBL" id="BT015372">
    <property type="protein sequence ID" value="AAU05495.1"/>
    <property type="molecule type" value="mRNA"/>
</dbReference>
<dbReference type="EMBL" id="BT015670">
    <property type="protein sequence ID" value="AAU15169.1"/>
    <property type="molecule type" value="mRNA"/>
</dbReference>
<dbReference type="PIR" id="A86312">
    <property type="entry name" value="A86312"/>
</dbReference>
<dbReference type="RefSeq" id="NP_001077556.1">
    <molecule id="Q9FZ62-2"/>
    <property type="nucleotide sequence ID" value="NM_001084087.1"/>
</dbReference>
<dbReference type="RefSeq" id="NP_173213.2">
    <molecule id="Q9FZ62-1"/>
    <property type="nucleotide sequence ID" value="NM_101633.4"/>
</dbReference>
<dbReference type="SMR" id="Q9FZ62"/>
<dbReference type="FunCoup" id="Q9FZ62">
    <property type="interactions" value="1264"/>
</dbReference>
<dbReference type="STRING" id="3702.Q9FZ62"/>
<dbReference type="PaxDb" id="3702-AT1G17710.1"/>
<dbReference type="ProteomicsDB" id="226407">
    <molecule id="Q9FZ62-1"/>
</dbReference>
<dbReference type="EnsemblPlants" id="AT1G17710.1">
    <molecule id="Q9FZ62-1"/>
    <property type="protein sequence ID" value="AT1G17710.1"/>
    <property type="gene ID" value="AT1G17710"/>
</dbReference>
<dbReference type="EnsemblPlants" id="AT1G17710.2">
    <molecule id="Q9FZ62-2"/>
    <property type="protein sequence ID" value="AT1G17710.2"/>
    <property type="gene ID" value="AT1G17710"/>
</dbReference>
<dbReference type="GeneID" id="838347"/>
<dbReference type="Gramene" id="AT1G17710.1">
    <molecule id="Q9FZ62-1"/>
    <property type="protein sequence ID" value="AT1G17710.1"/>
    <property type="gene ID" value="AT1G17710"/>
</dbReference>
<dbReference type="Gramene" id="AT1G17710.2">
    <molecule id="Q9FZ62-2"/>
    <property type="protein sequence ID" value="AT1G17710.2"/>
    <property type="gene ID" value="AT1G17710"/>
</dbReference>
<dbReference type="KEGG" id="ath:AT1G17710"/>
<dbReference type="Araport" id="AT1G17710"/>
<dbReference type="TAIR" id="AT1G17710">
    <property type="gene designation" value="PEPC1"/>
</dbReference>
<dbReference type="eggNOG" id="KOG3120">
    <property type="taxonomic scope" value="Eukaryota"/>
</dbReference>
<dbReference type="HOGENOM" id="CLU_068983_1_1_1"/>
<dbReference type="InParanoid" id="Q9FZ62"/>
<dbReference type="OMA" id="SRCPDNM"/>
<dbReference type="OrthoDB" id="10267182at2759"/>
<dbReference type="PhylomeDB" id="Q9FZ62"/>
<dbReference type="BioCyc" id="ARA:AT1G17710-MONOMER"/>
<dbReference type="BRENDA" id="3.1.3.75">
    <property type="organism ID" value="399"/>
</dbReference>
<dbReference type="PRO" id="PR:Q9FZ62"/>
<dbReference type="Proteomes" id="UP000006548">
    <property type="component" value="Chromosome 1"/>
</dbReference>
<dbReference type="ExpressionAtlas" id="Q9FZ62">
    <property type="expression patterns" value="baseline and differential"/>
</dbReference>
<dbReference type="GO" id="GO:0004427">
    <property type="term" value="F:inorganic diphosphate phosphatase activity"/>
    <property type="evidence" value="ECO:0000250"/>
    <property type="project" value="UniProtKB"/>
</dbReference>
<dbReference type="GO" id="GO:0046872">
    <property type="term" value="F:metal ion binding"/>
    <property type="evidence" value="ECO:0007669"/>
    <property type="project" value="UniProtKB-KW"/>
</dbReference>
<dbReference type="GO" id="GO:0052731">
    <property type="term" value="F:phosphocholine phosphatase activity"/>
    <property type="evidence" value="ECO:0000314"/>
    <property type="project" value="TAIR"/>
</dbReference>
<dbReference type="GO" id="GO:0052732">
    <property type="term" value="F:phosphoethanolamine phosphatase activity"/>
    <property type="evidence" value="ECO:0000314"/>
    <property type="project" value="TAIR"/>
</dbReference>
<dbReference type="GO" id="GO:0051262">
    <property type="term" value="P:protein tetramerization"/>
    <property type="evidence" value="ECO:0000250"/>
    <property type="project" value="UniProtKB"/>
</dbReference>
<dbReference type="FunFam" id="3.40.50.1000:FF:000338">
    <property type="entry name" value="Inorganic pyrophosphatase 2"/>
    <property type="match status" value="1"/>
</dbReference>
<dbReference type="Gene3D" id="3.40.50.1000">
    <property type="entry name" value="HAD superfamily/HAD-like"/>
    <property type="match status" value="1"/>
</dbReference>
<dbReference type="InterPro" id="IPR036412">
    <property type="entry name" value="HAD-like_sf"/>
</dbReference>
<dbReference type="InterPro" id="IPR006384">
    <property type="entry name" value="HAD_hydro_PyrdxlP_Pase-like"/>
</dbReference>
<dbReference type="InterPro" id="IPR023214">
    <property type="entry name" value="HAD_sf"/>
</dbReference>
<dbReference type="InterPro" id="IPR016965">
    <property type="entry name" value="Pase_PHOSPHO-typ"/>
</dbReference>
<dbReference type="NCBIfam" id="TIGR01489">
    <property type="entry name" value="DKMTPPase-SF"/>
    <property type="match status" value="1"/>
</dbReference>
<dbReference type="NCBIfam" id="TIGR01488">
    <property type="entry name" value="HAD-SF-IB"/>
    <property type="match status" value="1"/>
</dbReference>
<dbReference type="PANTHER" id="PTHR20889:SF27">
    <property type="entry name" value="INORGANIC PYROPHOSPHATASE 2"/>
    <property type="match status" value="1"/>
</dbReference>
<dbReference type="PANTHER" id="PTHR20889">
    <property type="entry name" value="PHOSPHATASE, ORPHAN 1, 2"/>
    <property type="match status" value="1"/>
</dbReference>
<dbReference type="Pfam" id="PF06888">
    <property type="entry name" value="Put_Phosphatase"/>
    <property type="match status" value="1"/>
</dbReference>
<dbReference type="PIRSF" id="PIRSF031051">
    <property type="entry name" value="PyrdxlP_Pase_PHOSPHO2"/>
    <property type="match status" value="1"/>
</dbReference>
<dbReference type="SUPFAM" id="SSF56784">
    <property type="entry name" value="HAD-like"/>
    <property type="match status" value="1"/>
</dbReference>
<feature type="chain" id="PRO_0000404257" description="Inorganic pyrophosphatase 2">
    <location>
        <begin position="1"/>
        <end position="279"/>
    </location>
</feature>
<feature type="active site" description="Nucleophile" evidence="1">
    <location>
        <position position="12"/>
    </location>
</feature>
<feature type="active site" description="Proton donor" evidence="1">
    <location>
        <position position="14"/>
    </location>
</feature>
<feature type="binding site" evidence="1">
    <location>
        <position position="12"/>
    </location>
    <ligand>
        <name>Mg(2+)</name>
        <dbReference type="ChEBI" id="CHEBI:18420"/>
    </ligand>
</feature>
<feature type="binding site" evidence="1">
    <location>
        <position position="14"/>
    </location>
    <ligand>
        <name>Mg(2+)</name>
        <dbReference type="ChEBI" id="CHEBI:18420"/>
    </ligand>
</feature>
<feature type="binding site" evidence="1">
    <location>
        <position position="23"/>
    </location>
    <ligand>
        <name>substrate</name>
    </ligand>
</feature>
<feature type="binding site" evidence="1">
    <location>
        <position position="98"/>
    </location>
    <ligand>
        <name>substrate</name>
    </ligand>
</feature>
<feature type="binding site" evidence="1">
    <location>
        <position position="182"/>
    </location>
    <ligand>
        <name>Mg(2+)</name>
        <dbReference type="ChEBI" id="CHEBI:18420"/>
    </ligand>
</feature>
<feature type="splice variant" id="VSP_040549" description="In isoform 2." evidence="2">
    <original>AKNNNIVIVFDFDKTIIDVDSDNWVVDELGFTDLFNQLLPTMPWNSLM</original>
    <variation>FISHNTKSLFGFISKQ</variation>
    <location>
        <begin position="2"/>
        <end position="49"/>
    </location>
</feature>
<accession>Q9FZ62</accession>
<accession>A8MQ90</accession>
<sequence length="279" mass="31570">MAKNNNIVIVFDFDKTIIDVDSDNWVVDELGFTDLFNQLLPTMPWNSLMNRMMKELHDHGKTIEEIKQVLRRIPIHPRVIPAIKSAHALGCELRIVSDANTLFIETIIEHLGIGEFFSEINTNPGLVDEQGRLIVSPYHDFTKSSHGCSRCPPNMCKGLIIDRIQASLTKEGKTSKMIYLGDGAGDYCPSLGLKAEDYMMPRKNFPVWDLISQNPMLVKATVRDWTDGEDMERILMEIINEIMSSEEGEENDKMLSSENCKISVGIVHEPIQVPLNLVK</sequence>
<gene>
    <name type="ordered locus">At1g17710</name>
    <name type="ORF">F11A6.5</name>
</gene>
<protein>
    <recommendedName>
        <fullName>Inorganic pyrophosphatase 2</fullName>
        <shortName>AtPPsPase2</shortName>
        <shortName>PPi phosphatase 2</shortName>
        <shortName>Pyrophosphate-specific phosphatase 2</shortName>
        <ecNumber>3.6.1.1</ecNumber>
    </recommendedName>
</protein>
<comment type="function">
    <text evidence="1">Catalyzes the specific cleavage of pyrophosphate.</text>
</comment>
<comment type="catalytic activity">
    <reaction>
        <text>diphosphate + H2O = 2 phosphate + H(+)</text>
        <dbReference type="Rhea" id="RHEA:24576"/>
        <dbReference type="ChEBI" id="CHEBI:15377"/>
        <dbReference type="ChEBI" id="CHEBI:15378"/>
        <dbReference type="ChEBI" id="CHEBI:33019"/>
        <dbReference type="ChEBI" id="CHEBI:43474"/>
        <dbReference type="EC" id="3.6.1.1"/>
    </reaction>
</comment>
<comment type="cofactor">
    <cofactor evidence="1">
        <name>Mg(2+)</name>
        <dbReference type="ChEBI" id="CHEBI:18420"/>
    </cofactor>
</comment>
<comment type="subunit">
    <text evidence="1">Tetramer.</text>
</comment>
<comment type="alternative products">
    <event type="alternative splicing"/>
    <isoform>
        <id>Q9FZ62-1</id>
        <name>1</name>
        <sequence type="displayed"/>
    </isoform>
    <isoform>
        <id>Q9FZ62-2</id>
        <name>2</name>
        <sequence type="described" ref="VSP_040549"/>
    </isoform>
</comment>
<comment type="similarity">
    <text evidence="2">Belongs to the HAD-like hydrolase superfamily.</text>
</comment>
<proteinExistence type="evidence at transcript level"/>
<reference key="1">
    <citation type="journal article" date="2000" name="Nature">
        <title>Sequence and analysis of chromosome 1 of the plant Arabidopsis thaliana.</title>
        <authorList>
            <person name="Theologis A."/>
            <person name="Ecker J.R."/>
            <person name="Palm C.J."/>
            <person name="Federspiel N.A."/>
            <person name="Kaul S."/>
            <person name="White O."/>
            <person name="Alonso J."/>
            <person name="Altafi H."/>
            <person name="Araujo R."/>
            <person name="Bowman C.L."/>
            <person name="Brooks S.Y."/>
            <person name="Buehler E."/>
            <person name="Chan A."/>
            <person name="Chao Q."/>
            <person name="Chen H."/>
            <person name="Cheuk R.F."/>
            <person name="Chin C.W."/>
            <person name="Chung M.K."/>
            <person name="Conn L."/>
            <person name="Conway A.B."/>
            <person name="Conway A.R."/>
            <person name="Creasy T.H."/>
            <person name="Dewar K."/>
            <person name="Dunn P."/>
            <person name="Etgu P."/>
            <person name="Feldblyum T.V."/>
            <person name="Feng J.-D."/>
            <person name="Fong B."/>
            <person name="Fujii C.Y."/>
            <person name="Gill J.E."/>
            <person name="Goldsmith A.D."/>
            <person name="Haas B."/>
            <person name="Hansen N.F."/>
            <person name="Hughes B."/>
            <person name="Huizar L."/>
            <person name="Hunter J.L."/>
            <person name="Jenkins J."/>
            <person name="Johnson-Hopson C."/>
            <person name="Khan S."/>
            <person name="Khaykin E."/>
            <person name="Kim C.J."/>
            <person name="Koo H.L."/>
            <person name="Kremenetskaia I."/>
            <person name="Kurtz D.B."/>
            <person name="Kwan A."/>
            <person name="Lam B."/>
            <person name="Langin-Hooper S."/>
            <person name="Lee A."/>
            <person name="Lee J.M."/>
            <person name="Lenz C.A."/>
            <person name="Li J.H."/>
            <person name="Li Y.-P."/>
            <person name="Lin X."/>
            <person name="Liu S.X."/>
            <person name="Liu Z.A."/>
            <person name="Luros J.S."/>
            <person name="Maiti R."/>
            <person name="Marziali A."/>
            <person name="Militscher J."/>
            <person name="Miranda M."/>
            <person name="Nguyen M."/>
            <person name="Nierman W.C."/>
            <person name="Osborne B.I."/>
            <person name="Pai G."/>
            <person name="Peterson J."/>
            <person name="Pham P.K."/>
            <person name="Rizzo M."/>
            <person name="Rooney T."/>
            <person name="Rowley D."/>
            <person name="Sakano H."/>
            <person name="Salzberg S.L."/>
            <person name="Schwartz J.R."/>
            <person name="Shinn P."/>
            <person name="Southwick A.M."/>
            <person name="Sun H."/>
            <person name="Tallon L.J."/>
            <person name="Tambunga G."/>
            <person name="Toriumi M.J."/>
            <person name="Town C.D."/>
            <person name="Utterback T."/>
            <person name="Van Aken S."/>
            <person name="Vaysberg M."/>
            <person name="Vysotskaia V.S."/>
            <person name="Walker M."/>
            <person name="Wu D."/>
            <person name="Yu G."/>
            <person name="Fraser C.M."/>
            <person name="Venter J.C."/>
            <person name="Davis R.W."/>
        </authorList>
    </citation>
    <scope>NUCLEOTIDE SEQUENCE [LARGE SCALE GENOMIC DNA]</scope>
    <source>
        <strain>cv. Columbia</strain>
    </source>
</reference>
<reference key="2">
    <citation type="journal article" date="2017" name="Plant J.">
        <title>Araport11: a complete reannotation of the Arabidopsis thaliana reference genome.</title>
        <authorList>
            <person name="Cheng C.Y."/>
            <person name="Krishnakumar V."/>
            <person name="Chan A.P."/>
            <person name="Thibaud-Nissen F."/>
            <person name="Schobel S."/>
            <person name="Town C.D."/>
        </authorList>
    </citation>
    <scope>GENOME REANNOTATION</scope>
    <source>
        <strain>cv. Columbia</strain>
    </source>
</reference>
<reference key="3">
    <citation type="submission" date="2004-09" db="EMBL/GenBank/DDBJ databases">
        <title>Arabidopsis ORF clones.</title>
        <authorList>
            <person name="Cheuk R.F."/>
            <person name="Chen H."/>
            <person name="Kim C.J."/>
            <person name="Shinn P."/>
            <person name="Ecker J.R."/>
        </authorList>
    </citation>
    <scope>NUCLEOTIDE SEQUENCE [LARGE SCALE MRNA] (ISOFORM 1)</scope>
    <source>
        <strain>cv. Columbia</strain>
    </source>
</reference>
<keyword id="KW-0025">Alternative splicing</keyword>
<keyword id="KW-0378">Hydrolase</keyword>
<keyword id="KW-0460">Magnesium</keyword>
<keyword id="KW-0479">Metal-binding</keyword>
<keyword id="KW-1185">Reference proteome</keyword>
<organism>
    <name type="scientific">Arabidopsis thaliana</name>
    <name type="common">Mouse-ear cress</name>
    <dbReference type="NCBI Taxonomy" id="3702"/>
    <lineage>
        <taxon>Eukaryota</taxon>
        <taxon>Viridiplantae</taxon>
        <taxon>Streptophyta</taxon>
        <taxon>Embryophyta</taxon>
        <taxon>Tracheophyta</taxon>
        <taxon>Spermatophyta</taxon>
        <taxon>Magnoliopsida</taxon>
        <taxon>eudicotyledons</taxon>
        <taxon>Gunneridae</taxon>
        <taxon>Pentapetalae</taxon>
        <taxon>rosids</taxon>
        <taxon>malvids</taxon>
        <taxon>Brassicales</taxon>
        <taxon>Brassicaceae</taxon>
        <taxon>Camelineae</taxon>
        <taxon>Arabidopsis</taxon>
    </lineage>
</organism>
<name>PPSP2_ARATH</name>